<feature type="chain" id="PRO_1000129107" description="Aspartate--ammonia ligase">
    <location>
        <begin position="1"/>
        <end position="327"/>
    </location>
</feature>
<comment type="catalytic activity">
    <reaction evidence="1">
        <text>L-aspartate + NH4(+) + ATP = L-asparagine + AMP + diphosphate + H(+)</text>
        <dbReference type="Rhea" id="RHEA:11372"/>
        <dbReference type="ChEBI" id="CHEBI:15378"/>
        <dbReference type="ChEBI" id="CHEBI:28938"/>
        <dbReference type="ChEBI" id="CHEBI:29991"/>
        <dbReference type="ChEBI" id="CHEBI:30616"/>
        <dbReference type="ChEBI" id="CHEBI:33019"/>
        <dbReference type="ChEBI" id="CHEBI:58048"/>
        <dbReference type="ChEBI" id="CHEBI:456215"/>
        <dbReference type="EC" id="6.3.1.1"/>
    </reaction>
</comment>
<comment type="pathway">
    <text evidence="1">Amino-acid biosynthesis; L-asparagine biosynthesis; L-asparagine from L-aspartate (ammonia route): step 1/1.</text>
</comment>
<comment type="subcellular location">
    <subcellularLocation>
        <location evidence="1">Cytoplasm</location>
    </subcellularLocation>
</comment>
<comment type="similarity">
    <text evidence="1">Belongs to the class-II aminoacyl-tRNA synthetase family. AsnA subfamily.</text>
</comment>
<organism>
    <name type="scientific">Bacillus cereus (strain G9842)</name>
    <dbReference type="NCBI Taxonomy" id="405531"/>
    <lineage>
        <taxon>Bacteria</taxon>
        <taxon>Bacillati</taxon>
        <taxon>Bacillota</taxon>
        <taxon>Bacilli</taxon>
        <taxon>Bacillales</taxon>
        <taxon>Bacillaceae</taxon>
        <taxon>Bacillus</taxon>
        <taxon>Bacillus cereus group</taxon>
    </lineage>
</organism>
<dbReference type="EC" id="6.3.1.1" evidence="1"/>
<dbReference type="EMBL" id="CP001186">
    <property type="protein sequence ID" value="ACK96163.1"/>
    <property type="molecule type" value="Genomic_DNA"/>
</dbReference>
<dbReference type="RefSeq" id="WP_000284912.1">
    <property type="nucleotide sequence ID" value="NC_011772.1"/>
</dbReference>
<dbReference type="SMR" id="B7IRB0"/>
<dbReference type="GeneID" id="72448516"/>
<dbReference type="KEGG" id="bcg:BCG9842_B3523"/>
<dbReference type="HOGENOM" id="CLU_071543_0_0_9"/>
<dbReference type="UniPathway" id="UPA00134">
    <property type="reaction ID" value="UER00194"/>
</dbReference>
<dbReference type="Proteomes" id="UP000006744">
    <property type="component" value="Chromosome"/>
</dbReference>
<dbReference type="GO" id="GO:0005829">
    <property type="term" value="C:cytosol"/>
    <property type="evidence" value="ECO:0007669"/>
    <property type="project" value="TreeGrafter"/>
</dbReference>
<dbReference type="GO" id="GO:0004071">
    <property type="term" value="F:aspartate-ammonia ligase activity"/>
    <property type="evidence" value="ECO:0007669"/>
    <property type="project" value="UniProtKB-UniRule"/>
</dbReference>
<dbReference type="GO" id="GO:0005524">
    <property type="term" value="F:ATP binding"/>
    <property type="evidence" value="ECO:0007669"/>
    <property type="project" value="UniProtKB-UniRule"/>
</dbReference>
<dbReference type="GO" id="GO:0140096">
    <property type="term" value="F:catalytic activity, acting on a protein"/>
    <property type="evidence" value="ECO:0007669"/>
    <property type="project" value="UniProtKB-ARBA"/>
</dbReference>
<dbReference type="GO" id="GO:0016740">
    <property type="term" value="F:transferase activity"/>
    <property type="evidence" value="ECO:0007669"/>
    <property type="project" value="UniProtKB-ARBA"/>
</dbReference>
<dbReference type="GO" id="GO:0070981">
    <property type="term" value="P:L-asparagine biosynthetic process"/>
    <property type="evidence" value="ECO:0007669"/>
    <property type="project" value="UniProtKB-UniRule"/>
</dbReference>
<dbReference type="CDD" id="cd00645">
    <property type="entry name" value="AsnA"/>
    <property type="match status" value="1"/>
</dbReference>
<dbReference type="Gene3D" id="3.30.930.10">
    <property type="entry name" value="Bira Bifunctional Protein, Domain 2"/>
    <property type="match status" value="1"/>
</dbReference>
<dbReference type="HAMAP" id="MF_00555">
    <property type="entry name" value="AsnA"/>
    <property type="match status" value="1"/>
</dbReference>
<dbReference type="InterPro" id="IPR006195">
    <property type="entry name" value="aa-tRNA-synth_II"/>
</dbReference>
<dbReference type="InterPro" id="IPR045864">
    <property type="entry name" value="aa-tRNA-synth_II/BPL/LPL"/>
</dbReference>
<dbReference type="InterPro" id="IPR004618">
    <property type="entry name" value="AsnA"/>
</dbReference>
<dbReference type="NCBIfam" id="TIGR00669">
    <property type="entry name" value="asnA"/>
    <property type="match status" value="1"/>
</dbReference>
<dbReference type="PANTHER" id="PTHR30073">
    <property type="entry name" value="ASPARTATE--AMMONIA LIGASE"/>
    <property type="match status" value="1"/>
</dbReference>
<dbReference type="PANTHER" id="PTHR30073:SF5">
    <property type="entry name" value="ASPARTATE--AMMONIA LIGASE"/>
    <property type="match status" value="1"/>
</dbReference>
<dbReference type="Pfam" id="PF03590">
    <property type="entry name" value="AsnA"/>
    <property type="match status" value="1"/>
</dbReference>
<dbReference type="PIRSF" id="PIRSF001555">
    <property type="entry name" value="Asp_ammon_ligase"/>
    <property type="match status" value="1"/>
</dbReference>
<dbReference type="SUPFAM" id="SSF55681">
    <property type="entry name" value="Class II aaRS and biotin synthetases"/>
    <property type="match status" value="1"/>
</dbReference>
<dbReference type="PROSITE" id="PS50862">
    <property type="entry name" value="AA_TRNA_LIGASE_II"/>
    <property type="match status" value="1"/>
</dbReference>
<gene>
    <name evidence="1" type="primary">asnA</name>
    <name type="ordered locus">BCG9842_B3523</name>
</gene>
<reference key="1">
    <citation type="submission" date="2008-10" db="EMBL/GenBank/DDBJ databases">
        <title>Genome sequence of Bacillus cereus G9842.</title>
        <authorList>
            <person name="Dodson R.J."/>
            <person name="Durkin A.S."/>
            <person name="Rosovitz M.J."/>
            <person name="Rasko D.A."/>
            <person name="Hoffmaster A."/>
            <person name="Ravel J."/>
            <person name="Sutton G."/>
        </authorList>
    </citation>
    <scope>NUCLEOTIDE SEQUENCE [LARGE SCALE GENOMIC DNA]</scope>
    <source>
        <strain>G9842</strain>
    </source>
</reference>
<accession>B7IRB0</accession>
<keyword id="KW-0028">Amino-acid biosynthesis</keyword>
<keyword id="KW-0061">Asparagine biosynthesis</keyword>
<keyword id="KW-0067">ATP-binding</keyword>
<keyword id="KW-0963">Cytoplasm</keyword>
<keyword id="KW-0436">Ligase</keyword>
<keyword id="KW-0547">Nucleotide-binding</keyword>
<protein>
    <recommendedName>
        <fullName evidence="1">Aspartate--ammonia ligase</fullName>
        <ecNumber evidence="1">6.3.1.1</ecNumber>
    </recommendedName>
    <alternativeName>
        <fullName evidence="1">Asparagine synthetase A</fullName>
    </alternativeName>
</protein>
<name>ASNA_BACC2</name>
<evidence type="ECO:0000255" key="1">
    <source>
        <dbReference type="HAMAP-Rule" id="MF_00555"/>
    </source>
</evidence>
<proteinExistence type="inferred from homology"/>
<sequence>MYQSLMTVRETQIAIKEVKTFFEDQLAKRLELFRVSAPLFVTKKSGLNDHLNGVERPIEFDMLHSGEELEIVHSLAKWKRFALHEYGYEAGEGLYTNMNAIRRDEELDATHSIYVDQWDWEKIVQKEWRTVDYLQKTVQTIYGIFKDLEDHLFEKYPFLGKYLPEEIVFITSQELEDKYPELTPKDREHAIAKEHGAVFIIGIGDALRSGEKHDGRAADYDDWKLNGDILFWHPVLQSSFELSSMGIRVDSKSLDEQLTKTGEDFKREYDFHKGILEDVLPLTIGGGIGQSRMCMYFLRKAHIGEVQSSVWPDDLRAACKKENIHLF</sequence>